<reference key="1">
    <citation type="journal article" date="2000" name="Nature">
        <title>Sequence and analysis of chromosome 1 of the plant Arabidopsis thaliana.</title>
        <authorList>
            <person name="Theologis A."/>
            <person name="Ecker J.R."/>
            <person name="Palm C.J."/>
            <person name="Federspiel N.A."/>
            <person name="Kaul S."/>
            <person name="White O."/>
            <person name="Alonso J."/>
            <person name="Altafi H."/>
            <person name="Araujo R."/>
            <person name="Bowman C.L."/>
            <person name="Brooks S.Y."/>
            <person name="Buehler E."/>
            <person name="Chan A."/>
            <person name="Chao Q."/>
            <person name="Chen H."/>
            <person name="Cheuk R.F."/>
            <person name="Chin C.W."/>
            <person name="Chung M.K."/>
            <person name="Conn L."/>
            <person name="Conway A.B."/>
            <person name="Conway A.R."/>
            <person name="Creasy T.H."/>
            <person name="Dewar K."/>
            <person name="Dunn P."/>
            <person name="Etgu P."/>
            <person name="Feldblyum T.V."/>
            <person name="Feng J.-D."/>
            <person name="Fong B."/>
            <person name="Fujii C.Y."/>
            <person name="Gill J.E."/>
            <person name="Goldsmith A.D."/>
            <person name="Haas B."/>
            <person name="Hansen N.F."/>
            <person name="Hughes B."/>
            <person name="Huizar L."/>
            <person name="Hunter J.L."/>
            <person name="Jenkins J."/>
            <person name="Johnson-Hopson C."/>
            <person name="Khan S."/>
            <person name="Khaykin E."/>
            <person name="Kim C.J."/>
            <person name="Koo H.L."/>
            <person name="Kremenetskaia I."/>
            <person name="Kurtz D.B."/>
            <person name="Kwan A."/>
            <person name="Lam B."/>
            <person name="Langin-Hooper S."/>
            <person name="Lee A."/>
            <person name="Lee J.M."/>
            <person name="Lenz C.A."/>
            <person name="Li J.H."/>
            <person name="Li Y.-P."/>
            <person name="Lin X."/>
            <person name="Liu S.X."/>
            <person name="Liu Z.A."/>
            <person name="Luros J.S."/>
            <person name="Maiti R."/>
            <person name="Marziali A."/>
            <person name="Militscher J."/>
            <person name="Miranda M."/>
            <person name="Nguyen M."/>
            <person name="Nierman W.C."/>
            <person name="Osborne B.I."/>
            <person name="Pai G."/>
            <person name="Peterson J."/>
            <person name="Pham P.K."/>
            <person name="Rizzo M."/>
            <person name="Rooney T."/>
            <person name="Rowley D."/>
            <person name="Sakano H."/>
            <person name="Salzberg S.L."/>
            <person name="Schwartz J.R."/>
            <person name="Shinn P."/>
            <person name="Southwick A.M."/>
            <person name="Sun H."/>
            <person name="Tallon L.J."/>
            <person name="Tambunga G."/>
            <person name="Toriumi M.J."/>
            <person name="Town C.D."/>
            <person name="Utterback T."/>
            <person name="Van Aken S."/>
            <person name="Vaysberg M."/>
            <person name="Vysotskaia V.S."/>
            <person name="Walker M."/>
            <person name="Wu D."/>
            <person name="Yu G."/>
            <person name="Fraser C.M."/>
            <person name="Venter J.C."/>
            <person name="Davis R.W."/>
        </authorList>
    </citation>
    <scope>NUCLEOTIDE SEQUENCE [LARGE SCALE GENOMIC DNA]</scope>
    <source>
        <strain>cv. Columbia</strain>
    </source>
</reference>
<reference key="2">
    <citation type="journal article" date="2017" name="Plant J.">
        <title>Araport11: a complete reannotation of the Arabidopsis thaliana reference genome.</title>
        <authorList>
            <person name="Cheng C.Y."/>
            <person name="Krishnakumar V."/>
            <person name="Chan A.P."/>
            <person name="Thibaud-Nissen F."/>
            <person name="Schobel S."/>
            <person name="Town C.D."/>
        </authorList>
    </citation>
    <scope>GENOME REANNOTATION</scope>
    <source>
        <strain>cv. Columbia</strain>
    </source>
</reference>
<evidence type="ECO:0000250" key="1"/>
<evidence type="ECO:0000250" key="2">
    <source>
        <dbReference type="UniProtKB" id="Q9LPZ9"/>
    </source>
</evidence>
<evidence type="ECO:0000255" key="3"/>
<evidence type="ECO:0000255" key="4">
    <source>
        <dbReference type="PROSITE-ProRule" id="PRU00038"/>
    </source>
</evidence>
<evidence type="ECO:0000255" key="5">
    <source>
        <dbReference type="PROSITE-ProRule" id="PRU00159"/>
    </source>
</evidence>
<evidence type="ECO:0000255" key="6">
    <source>
        <dbReference type="PROSITE-ProRule" id="PRU00315"/>
    </source>
</evidence>
<evidence type="ECO:0000255" key="7">
    <source>
        <dbReference type="PROSITE-ProRule" id="PRU10027"/>
    </source>
</evidence>
<evidence type="ECO:0000305" key="8"/>
<gene>
    <name type="ordered locus">At1g61400</name>
    <name type="ORF">T1F9.11</name>
</gene>
<keyword id="KW-0067">ATP-binding</keyword>
<keyword id="KW-1003">Cell membrane</keyword>
<keyword id="KW-1015">Disulfide bond</keyword>
<keyword id="KW-0245">EGF-like domain</keyword>
<keyword id="KW-0325">Glycoprotein</keyword>
<keyword id="KW-0418">Kinase</keyword>
<keyword id="KW-0430">Lectin</keyword>
<keyword id="KW-0472">Membrane</keyword>
<keyword id="KW-0547">Nucleotide-binding</keyword>
<keyword id="KW-0597">Phosphoprotein</keyword>
<keyword id="KW-0675">Receptor</keyword>
<keyword id="KW-1185">Reference proteome</keyword>
<keyword id="KW-0723">Serine/threonine-protein kinase</keyword>
<keyword id="KW-0732">Signal</keyword>
<keyword id="KW-0808">Transferase</keyword>
<keyword id="KW-0812">Transmembrane</keyword>
<keyword id="KW-1133">Transmembrane helix</keyword>
<dbReference type="EC" id="2.7.11.1"/>
<dbReference type="EMBL" id="AC004255">
    <property type="protein sequence ID" value="AAC13901.1"/>
    <property type="status" value="ALT_SEQ"/>
    <property type="molecule type" value="Genomic_DNA"/>
</dbReference>
<dbReference type="EMBL" id="CP002684">
    <property type="protein sequence ID" value="AEE33832.2"/>
    <property type="molecule type" value="Genomic_DNA"/>
</dbReference>
<dbReference type="RefSeq" id="NP_001319284.1">
    <property type="nucleotide sequence ID" value="NM_001333955.1"/>
</dbReference>
<dbReference type="SMR" id="O64780"/>
<dbReference type="FunCoup" id="O64780">
    <property type="interactions" value="38"/>
</dbReference>
<dbReference type="GlyGen" id="O64780">
    <property type="glycosylation" value="7 sites"/>
</dbReference>
<dbReference type="PaxDb" id="3702-AT1G61400.1"/>
<dbReference type="ProteomicsDB" id="234338"/>
<dbReference type="EnsemblPlants" id="AT1G61400.1">
    <property type="protein sequence ID" value="AT1G61400.1"/>
    <property type="gene ID" value="AT1G61400"/>
</dbReference>
<dbReference type="GeneID" id="842434"/>
<dbReference type="Gramene" id="AT1G61400.1">
    <property type="protein sequence ID" value="AT1G61400.1"/>
    <property type="gene ID" value="AT1G61400"/>
</dbReference>
<dbReference type="KEGG" id="ath:AT1G61400"/>
<dbReference type="Araport" id="AT1G61400"/>
<dbReference type="TAIR" id="AT1G61400"/>
<dbReference type="eggNOG" id="ENOG502QQPW">
    <property type="taxonomic scope" value="Eukaryota"/>
</dbReference>
<dbReference type="HOGENOM" id="CLU_000288_116_1_1"/>
<dbReference type="InParanoid" id="O64780"/>
<dbReference type="OMA" id="WEFCSEN"/>
<dbReference type="PRO" id="PR:O64780"/>
<dbReference type="Proteomes" id="UP000006548">
    <property type="component" value="Chromosome 1"/>
</dbReference>
<dbReference type="ExpressionAtlas" id="O64780">
    <property type="expression patterns" value="baseline and differential"/>
</dbReference>
<dbReference type="GO" id="GO:0005886">
    <property type="term" value="C:plasma membrane"/>
    <property type="evidence" value="ECO:0007669"/>
    <property type="project" value="UniProtKB-SubCell"/>
</dbReference>
<dbReference type="GO" id="GO:0005524">
    <property type="term" value="F:ATP binding"/>
    <property type="evidence" value="ECO:0007669"/>
    <property type="project" value="UniProtKB-KW"/>
</dbReference>
<dbReference type="GO" id="GO:0005516">
    <property type="term" value="F:calmodulin binding"/>
    <property type="evidence" value="ECO:0000250"/>
    <property type="project" value="UniProtKB"/>
</dbReference>
<dbReference type="GO" id="GO:0030246">
    <property type="term" value="F:carbohydrate binding"/>
    <property type="evidence" value="ECO:0007669"/>
    <property type="project" value="UniProtKB-KW"/>
</dbReference>
<dbReference type="GO" id="GO:0106310">
    <property type="term" value="F:protein serine kinase activity"/>
    <property type="evidence" value="ECO:0007669"/>
    <property type="project" value="RHEA"/>
</dbReference>
<dbReference type="GO" id="GO:0004674">
    <property type="term" value="F:protein serine/threonine kinase activity"/>
    <property type="evidence" value="ECO:0000250"/>
    <property type="project" value="UniProtKB"/>
</dbReference>
<dbReference type="GO" id="GO:0031625">
    <property type="term" value="F:ubiquitin protein ligase binding"/>
    <property type="evidence" value="ECO:0007669"/>
    <property type="project" value="UniProtKB-ARBA"/>
</dbReference>
<dbReference type="GO" id="GO:0048544">
    <property type="term" value="P:recognition of pollen"/>
    <property type="evidence" value="ECO:0007669"/>
    <property type="project" value="InterPro"/>
</dbReference>
<dbReference type="CDD" id="cd00028">
    <property type="entry name" value="B_lectin"/>
    <property type="match status" value="1"/>
</dbReference>
<dbReference type="CDD" id="cd01098">
    <property type="entry name" value="PAN_AP_plant"/>
    <property type="match status" value="1"/>
</dbReference>
<dbReference type="CDD" id="cd14066">
    <property type="entry name" value="STKc_IRAK"/>
    <property type="match status" value="1"/>
</dbReference>
<dbReference type="FunFam" id="1.10.510.10:FF:000345">
    <property type="entry name" value="G-type lectin S-receptor-like serine/threonine-protein kinase"/>
    <property type="match status" value="1"/>
</dbReference>
<dbReference type="FunFam" id="2.90.10.10:FF:000003">
    <property type="entry name" value="G-type lectin S-receptor-like serine/threonine-protein kinase"/>
    <property type="match status" value="1"/>
</dbReference>
<dbReference type="FunFam" id="3.30.200.20:FF:000401">
    <property type="entry name" value="G-type lectin S-receptor-like serine/threonine-protein kinase SD1-29"/>
    <property type="match status" value="1"/>
</dbReference>
<dbReference type="Gene3D" id="2.90.10.10">
    <property type="entry name" value="Bulb-type lectin domain"/>
    <property type="match status" value="1"/>
</dbReference>
<dbReference type="Gene3D" id="3.30.200.20">
    <property type="entry name" value="Phosphorylase Kinase, domain 1"/>
    <property type="match status" value="1"/>
</dbReference>
<dbReference type="Gene3D" id="1.10.510.10">
    <property type="entry name" value="Transferase(Phosphotransferase) domain 1"/>
    <property type="match status" value="1"/>
</dbReference>
<dbReference type="InterPro" id="IPR001480">
    <property type="entry name" value="Bulb-type_lectin_dom"/>
</dbReference>
<dbReference type="InterPro" id="IPR036426">
    <property type="entry name" value="Bulb-type_lectin_dom_sf"/>
</dbReference>
<dbReference type="InterPro" id="IPR011009">
    <property type="entry name" value="Kinase-like_dom_sf"/>
</dbReference>
<dbReference type="InterPro" id="IPR003609">
    <property type="entry name" value="Pan_app"/>
</dbReference>
<dbReference type="InterPro" id="IPR000719">
    <property type="entry name" value="Prot_kinase_dom"/>
</dbReference>
<dbReference type="InterPro" id="IPR017441">
    <property type="entry name" value="Protein_kinase_ATP_BS"/>
</dbReference>
<dbReference type="InterPro" id="IPR021820">
    <property type="entry name" value="S-locus_recpt_kinase_C"/>
</dbReference>
<dbReference type="InterPro" id="IPR000858">
    <property type="entry name" value="S_locus_glycoprot_dom"/>
</dbReference>
<dbReference type="InterPro" id="IPR001245">
    <property type="entry name" value="Ser-Thr/Tyr_kinase_cat_dom"/>
</dbReference>
<dbReference type="InterPro" id="IPR008271">
    <property type="entry name" value="Ser/Thr_kinase_AS"/>
</dbReference>
<dbReference type="InterPro" id="IPR024171">
    <property type="entry name" value="SRK-like_kinase"/>
</dbReference>
<dbReference type="PANTHER" id="PTHR27002:SF542">
    <property type="entry name" value="BNACNNG56910D PROTEIN"/>
    <property type="match status" value="1"/>
</dbReference>
<dbReference type="PANTHER" id="PTHR27002">
    <property type="entry name" value="RECEPTOR-LIKE SERINE/THREONINE-PROTEIN KINASE SD1-8"/>
    <property type="match status" value="1"/>
</dbReference>
<dbReference type="Pfam" id="PF01453">
    <property type="entry name" value="B_lectin"/>
    <property type="match status" value="1"/>
</dbReference>
<dbReference type="Pfam" id="PF11883">
    <property type="entry name" value="DUF3403"/>
    <property type="match status" value="1"/>
</dbReference>
<dbReference type="Pfam" id="PF08276">
    <property type="entry name" value="PAN_2"/>
    <property type="match status" value="1"/>
</dbReference>
<dbReference type="Pfam" id="PF07714">
    <property type="entry name" value="PK_Tyr_Ser-Thr"/>
    <property type="match status" value="1"/>
</dbReference>
<dbReference type="Pfam" id="PF00954">
    <property type="entry name" value="S_locus_glycop"/>
    <property type="match status" value="1"/>
</dbReference>
<dbReference type="PIRSF" id="PIRSF000641">
    <property type="entry name" value="SRK"/>
    <property type="match status" value="1"/>
</dbReference>
<dbReference type="SMART" id="SM00108">
    <property type="entry name" value="B_lectin"/>
    <property type="match status" value="1"/>
</dbReference>
<dbReference type="SMART" id="SM00473">
    <property type="entry name" value="PAN_AP"/>
    <property type="match status" value="1"/>
</dbReference>
<dbReference type="SMART" id="SM00220">
    <property type="entry name" value="S_TKc"/>
    <property type="match status" value="1"/>
</dbReference>
<dbReference type="SUPFAM" id="SSF51110">
    <property type="entry name" value="alpha-D-mannose-specific plant lectins"/>
    <property type="match status" value="1"/>
</dbReference>
<dbReference type="SUPFAM" id="SSF56112">
    <property type="entry name" value="Protein kinase-like (PK-like)"/>
    <property type="match status" value="1"/>
</dbReference>
<dbReference type="PROSITE" id="PS50927">
    <property type="entry name" value="BULB_LECTIN"/>
    <property type="match status" value="1"/>
</dbReference>
<dbReference type="PROSITE" id="PS50948">
    <property type="entry name" value="PAN"/>
    <property type="match status" value="1"/>
</dbReference>
<dbReference type="PROSITE" id="PS00107">
    <property type="entry name" value="PROTEIN_KINASE_ATP"/>
    <property type="match status" value="1"/>
</dbReference>
<dbReference type="PROSITE" id="PS50011">
    <property type="entry name" value="PROTEIN_KINASE_DOM"/>
    <property type="match status" value="1"/>
</dbReference>
<dbReference type="PROSITE" id="PS00108">
    <property type="entry name" value="PROTEIN_KINASE_ST"/>
    <property type="match status" value="1"/>
</dbReference>
<accession>O64780</accession>
<accession>F4HTK7</accession>
<sequence length="814" mass="91382">MDFLFLLLERKNKHMGKKRVVLLWLSIFISFSSAEITEESPLSIGQTLSSSNGVYELGFFSFNNSQNQYVGISFKGIIPRVVVWVANREKPVTDSAANLVISSNGSLQLFNGKHGVVWSSGKALASNGSRVELLDSGNLVVIEKVSGRTLWESFEHLGDTLLPHSTIMYNVHTGEKRGLTSWKSYTDPSPGDFVVLITPQVPSQGFLMRGSTPYFRSGPWAKTKFTGLPQMDESYTSPFSLTQDVNGSGYYSYFDRDNKRSRIRLTPDGSMKALRYNGMDWDTTYEGPANSCDIYGVCGPFGFCVISVPPKCKCFKGFIPKSIEEWKTGNWTSGCVRRSELHCQGNSTGKDANVFHTVPNIKPPDFYEYADSVDAEECQQNCLNNCSCLAFAYIPGIGCLMWSKDLMDTVQFAAGGELLSIRLARSELDVNKRKKTIIAITVSLTLFVILGFTAFGFWRRRVEQNALISEDAWRNDLQTQDVPGLEYFEMNTIQTATNNFSLSNKLGHGGFGSVYKGKLQDGREIAVKRLSSSSEQGKQEFMNEIVLISKLQHRNLVRVLGCCVEGTEKLLIYEFMKNKSLDTFVFDSKKRLEIDWPKRFDIIQGIARGLLYLHRDSRLRIIHRDLKVSNILLDEKMNPKISDFGLARMFHGTEYQDKTRRVVGTLGYMSPEYAWAGVFSEKSDIYSFGVLLLEIISGEKISRFSYGEEGKTLLAYAWECWCGARGVNLLDQALGDSCHPYEVGRCVQIGLLCVQYQPADRPNTLELLSMLTTTSDLPLPKQPTFVVHTRDGKSPSNDSMITVNEMTESVIHGR</sequence>
<proteinExistence type="inferred from homology"/>
<feature type="signal peptide" evidence="3">
    <location>
        <begin position="1"/>
        <end position="34"/>
    </location>
</feature>
<feature type="chain" id="PRO_0000401317" description="G-type lectin S-receptor-like serine/threonine-protein kinase At1g61400">
    <location>
        <begin position="35"/>
        <end position="814"/>
    </location>
</feature>
<feature type="topological domain" description="Extracellular" evidence="3">
    <location>
        <begin position="35"/>
        <end position="436"/>
    </location>
</feature>
<feature type="transmembrane region" description="Helical" evidence="3">
    <location>
        <begin position="437"/>
        <end position="457"/>
    </location>
</feature>
<feature type="topological domain" description="Cytoplasmic" evidence="3">
    <location>
        <begin position="458"/>
        <end position="814"/>
    </location>
</feature>
<feature type="domain" description="Bulb-type lectin" evidence="4">
    <location>
        <begin position="35"/>
        <end position="154"/>
    </location>
</feature>
<feature type="domain" description="EGF-like; atypical">
    <location>
        <begin position="288"/>
        <end position="324"/>
    </location>
</feature>
<feature type="domain" description="PAN" evidence="6">
    <location>
        <begin position="343"/>
        <end position="425"/>
    </location>
</feature>
<feature type="domain" description="Protein kinase" evidence="5">
    <location>
        <begin position="500"/>
        <end position="785"/>
    </location>
</feature>
<feature type="region of interest" description="CaM-binding" evidence="1">
    <location>
        <begin position="589"/>
        <end position="606"/>
    </location>
</feature>
<feature type="active site" description="Proton acceptor" evidence="5 7">
    <location>
        <position position="625"/>
    </location>
</feature>
<feature type="binding site" evidence="5">
    <location>
        <begin position="506"/>
        <end position="514"/>
    </location>
    <ligand>
        <name>ATP</name>
        <dbReference type="ChEBI" id="CHEBI:30616"/>
    </ligand>
</feature>
<feature type="binding site" evidence="5">
    <location>
        <position position="528"/>
    </location>
    <ligand>
        <name>ATP</name>
        <dbReference type="ChEBI" id="CHEBI:30616"/>
    </ligand>
</feature>
<feature type="modified residue" description="Phosphoserine" evidence="2">
    <location>
        <position position="534"/>
    </location>
</feature>
<feature type="modified residue" description="Phosphoserine" evidence="2">
    <location>
        <position position="549"/>
    </location>
</feature>
<feature type="modified residue" description="Phosphoserine" evidence="2">
    <location>
        <position position="629"/>
    </location>
</feature>
<feature type="modified residue" description="Phosphoserine" evidence="2">
    <location>
        <position position="642"/>
    </location>
</feature>
<feature type="modified residue" description="Phosphothreonine" evidence="2">
    <location>
        <position position="659"/>
    </location>
</feature>
<feature type="modified residue" description="Phosphoserine" evidence="2">
    <location>
        <position position="702"/>
    </location>
</feature>
<feature type="modified residue" description="Phosphoserine" evidence="2">
    <location>
        <position position="796"/>
    </location>
</feature>
<feature type="glycosylation site" description="N-linked (GlcNAc...) asparagine" evidence="3">
    <location>
        <position position="63"/>
    </location>
</feature>
<feature type="glycosylation site" description="N-linked (GlcNAc...) asparagine" evidence="3">
    <location>
        <position position="104"/>
    </location>
</feature>
<feature type="glycosylation site" description="N-linked (GlcNAc...) asparagine" evidence="3">
    <location>
        <position position="127"/>
    </location>
</feature>
<feature type="glycosylation site" description="N-linked (GlcNAc...) asparagine" evidence="3">
    <location>
        <position position="246"/>
    </location>
</feature>
<feature type="glycosylation site" description="N-linked (GlcNAc...) asparagine" evidence="3">
    <location>
        <position position="330"/>
    </location>
</feature>
<feature type="glycosylation site" description="N-linked (GlcNAc...) asparagine" evidence="3">
    <location>
        <position position="346"/>
    </location>
</feature>
<feature type="glycosylation site" description="N-linked (GlcNAc...) asparagine" evidence="3">
    <location>
        <position position="385"/>
    </location>
</feature>
<feature type="disulfide bond" evidence="1">
    <location>
        <begin position="292"/>
        <end position="304"/>
    </location>
</feature>
<feature type="disulfide bond" evidence="1">
    <location>
        <begin position="298"/>
        <end position="312"/>
    </location>
</feature>
<feature type="disulfide bond" evidence="1">
    <location>
        <begin position="378"/>
        <end position="399"/>
    </location>
</feature>
<feature type="disulfide bond" evidence="1">
    <location>
        <begin position="382"/>
        <end position="388"/>
    </location>
</feature>
<protein>
    <recommendedName>
        <fullName>G-type lectin S-receptor-like serine/threonine-protein kinase At1g61400</fullName>
        <ecNumber>2.7.11.1</ecNumber>
    </recommendedName>
</protein>
<comment type="catalytic activity">
    <reaction>
        <text>L-seryl-[protein] + ATP = O-phospho-L-seryl-[protein] + ADP + H(+)</text>
        <dbReference type="Rhea" id="RHEA:17989"/>
        <dbReference type="Rhea" id="RHEA-COMP:9863"/>
        <dbReference type="Rhea" id="RHEA-COMP:11604"/>
        <dbReference type="ChEBI" id="CHEBI:15378"/>
        <dbReference type="ChEBI" id="CHEBI:29999"/>
        <dbReference type="ChEBI" id="CHEBI:30616"/>
        <dbReference type="ChEBI" id="CHEBI:83421"/>
        <dbReference type="ChEBI" id="CHEBI:456216"/>
        <dbReference type="EC" id="2.7.11.1"/>
    </reaction>
</comment>
<comment type="catalytic activity">
    <reaction>
        <text>L-threonyl-[protein] + ATP = O-phospho-L-threonyl-[protein] + ADP + H(+)</text>
        <dbReference type="Rhea" id="RHEA:46608"/>
        <dbReference type="Rhea" id="RHEA-COMP:11060"/>
        <dbReference type="Rhea" id="RHEA-COMP:11605"/>
        <dbReference type="ChEBI" id="CHEBI:15378"/>
        <dbReference type="ChEBI" id="CHEBI:30013"/>
        <dbReference type="ChEBI" id="CHEBI:30616"/>
        <dbReference type="ChEBI" id="CHEBI:61977"/>
        <dbReference type="ChEBI" id="CHEBI:456216"/>
        <dbReference type="EC" id="2.7.11.1"/>
    </reaction>
</comment>
<comment type="subcellular location">
    <subcellularLocation>
        <location evidence="1">Cell membrane</location>
        <topology evidence="1">Single-pass type I membrane protein</topology>
    </subcellularLocation>
</comment>
<comment type="similarity">
    <text evidence="5">Belongs to the protein kinase superfamily. Ser/Thr protein kinase family.</text>
</comment>
<comment type="sequence caution" evidence="8">
    <conflict type="erroneous gene model prediction">
        <sequence resource="EMBL-CDS" id="AAC13901"/>
    </conflict>
</comment>
<organism>
    <name type="scientific">Arabidopsis thaliana</name>
    <name type="common">Mouse-ear cress</name>
    <dbReference type="NCBI Taxonomy" id="3702"/>
    <lineage>
        <taxon>Eukaryota</taxon>
        <taxon>Viridiplantae</taxon>
        <taxon>Streptophyta</taxon>
        <taxon>Embryophyta</taxon>
        <taxon>Tracheophyta</taxon>
        <taxon>Spermatophyta</taxon>
        <taxon>Magnoliopsida</taxon>
        <taxon>eudicotyledons</taxon>
        <taxon>Gunneridae</taxon>
        <taxon>Pentapetalae</taxon>
        <taxon>rosids</taxon>
        <taxon>malvids</taxon>
        <taxon>Brassicales</taxon>
        <taxon>Brassicaceae</taxon>
        <taxon>Camelineae</taxon>
        <taxon>Arabidopsis</taxon>
    </lineage>
</organism>
<name>Y1614_ARATH</name>